<dbReference type="EC" id="1.3.5.2" evidence="1"/>
<dbReference type="EMBL" id="CP001138">
    <property type="protein sequence ID" value="ACH52267.1"/>
    <property type="molecule type" value="Genomic_DNA"/>
</dbReference>
<dbReference type="RefSeq" id="WP_000291723.1">
    <property type="nucleotide sequence ID" value="NC_011149.1"/>
</dbReference>
<dbReference type="SMR" id="B5F1U2"/>
<dbReference type="KEGG" id="sea:SeAg_B1016"/>
<dbReference type="HOGENOM" id="CLU_013640_2_0_6"/>
<dbReference type="UniPathway" id="UPA00070">
    <property type="reaction ID" value="UER00946"/>
</dbReference>
<dbReference type="Proteomes" id="UP000008819">
    <property type="component" value="Chromosome"/>
</dbReference>
<dbReference type="GO" id="GO:0005737">
    <property type="term" value="C:cytoplasm"/>
    <property type="evidence" value="ECO:0007669"/>
    <property type="project" value="InterPro"/>
</dbReference>
<dbReference type="GO" id="GO:0005886">
    <property type="term" value="C:plasma membrane"/>
    <property type="evidence" value="ECO:0007669"/>
    <property type="project" value="UniProtKB-SubCell"/>
</dbReference>
<dbReference type="GO" id="GO:0106430">
    <property type="term" value="F:dihydroorotate dehydrogenase (quinone) activity"/>
    <property type="evidence" value="ECO:0007669"/>
    <property type="project" value="UniProtKB-EC"/>
</dbReference>
<dbReference type="GO" id="GO:0006207">
    <property type="term" value="P:'de novo' pyrimidine nucleobase biosynthetic process"/>
    <property type="evidence" value="ECO:0007669"/>
    <property type="project" value="InterPro"/>
</dbReference>
<dbReference type="GO" id="GO:0044205">
    <property type="term" value="P:'de novo' UMP biosynthetic process"/>
    <property type="evidence" value="ECO:0007669"/>
    <property type="project" value="UniProtKB-UniRule"/>
</dbReference>
<dbReference type="CDD" id="cd04738">
    <property type="entry name" value="DHOD_2_like"/>
    <property type="match status" value="1"/>
</dbReference>
<dbReference type="FunFam" id="3.20.20.70:FF:000028">
    <property type="entry name" value="Dihydroorotate dehydrogenase (quinone)"/>
    <property type="match status" value="1"/>
</dbReference>
<dbReference type="Gene3D" id="3.20.20.70">
    <property type="entry name" value="Aldolase class I"/>
    <property type="match status" value="1"/>
</dbReference>
<dbReference type="HAMAP" id="MF_00225">
    <property type="entry name" value="DHO_dh_type2"/>
    <property type="match status" value="1"/>
</dbReference>
<dbReference type="InterPro" id="IPR013785">
    <property type="entry name" value="Aldolase_TIM"/>
</dbReference>
<dbReference type="InterPro" id="IPR050074">
    <property type="entry name" value="DHO_dehydrogenase"/>
</dbReference>
<dbReference type="InterPro" id="IPR012135">
    <property type="entry name" value="Dihydroorotate_DH_1_2"/>
</dbReference>
<dbReference type="InterPro" id="IPR005719">
    <property type="entry name" value="Dihydroorotate_DH_2"/>
</dbReference>
<dbReference type="InterPro" id="IPR005720">
    <property type="entry name" value="Dihydroorotate_DH_cat"/>
</dbReference>
<dbReference type="InterPro" id="IPR001295">
    <property type="entry name" value="Dihydroorotate_DH_CS"/>
</dbReference>
<dbReference type="NCBIfam" id="NF003644">
    <property type="entry name" value="PRK05286.1-1"/>
    <property type="match status" value="1"/>
</dbReference>
<dbReference type="NCBIfam" id="NF003645">
    <property type="entry name" value="PRK05286.1-2"/>
    <property type="match status" value="1"/>
</dbReference>
<dbReference type="NCBIfam" id="NF003646">
    <property type="entry name" value="PRK05286.1-4"/>
    <property type="match status" value="1"/>
</dbReference>
<dbReference type="NCBIfam" id="NF003652">
    <property type="entry name" value="PRK05286.2-5"/>
    <property type="match status" value="1"/>
</dbReference>
<dbReference type="NCBIfam" id="TIGR01036">
    <property type="entry name" value="pyrD_sub2"/>
    <property type="match status" value="1"/>
</dbReference>
<dbReference type="PANTHER" id="PTHR48109:SF4">
    <property type="entry name" value="DIHYDROOROTATE DEHYDROGENASE (QUINONE), MITOCHONDRIAL"/>
    <property type="match status" value="1"/>
</dbReference>
<dbReference type="PANTHER" id="PTHR48109">
    <property type="entry name" value="DIHYDROOROTATE DEHYDROGENASE (QUINONE), MITOCHONDRIAL-RELATED"/>
    <property type="match status" value="1"/>
</dbReference>
<dbReference type="Pfam" id="PF01180">
    <property type="entry name" value="DHO_dh"/>
    <property type="match status" value="1"/>
</dbReference>
<dbReference type="PIRSF" id="PIRSF000164">
    <property type="entry name" value="DHO_oxidase"/>
    <property type="match status" value="1"/>
</dbReference>
<dbReference type="SUPFAM" id="SSF51395">
    <property type="entry name" value="FMN-linked oxidoreductases"/>
    <property type="match status" value="1"/>
</dbReference>
<dbReference type="PROSITE" id="PS00911">
    <property type="entry name" value="DHODEHASE_1"/>
    <property type="match status" value="1"/>
</dbReference>
<dbReference type="PROSITE" id="PS00912">
    <property type="entry name" value="DHODEHASE_2"/>
    <property type="match status" value="1"/>
</dbReference>
<reference key="1">
    <citation type="journal article" date="2011" name="J. Bacteriol.">
        <title>Comparative genomics of 28 Salmonella enterica isolates: evidence for CRISPR-mediated adaptive sublineage evolution.</title>
        <authorList>
            <person name="Fricke W.F."/>
            <person name="Mammel M.K."/>
            <person name="McDermott P.F."/>
            <person name="Tartera C."/>
            <person name="White D.G."/>
            <person name="Leclerc J.E."/>
            <person name="Ravel J."/>
            <person name="Cebula T.A."/>
        </authorList>
    </citation>
    <scope>NUCLEOTIDE SEQUENCE [LARGE SCALE GENOMIC DNA]</scope>
    <source>
        <strain>SL483</strain>
    </source>
</reference>
<keyword id="KW-1003">Cell membrane</keyword>
<keyword id="KW-0285">Flavoprotein</keyword>
<keyword id="KW-0288">FMN</keyword>
<keyword id="KW-0472">Membrane</keyword>
<keyword id="KW-0560">Oxidoreductase</keyword>
<keyword id="KW-0665">Pyrimidine biosynthesis</keyword>
<feature type="chain" id="PRO_1000100281" description="Dihydroorotate dehydrogenase (quinone)">
    <location>
        <begin position="1"/>
        <end position="336"/>
    </location>
</feature>
<feature type="active site" description="Nucleophile" evidence="1">
    <location>
        <position position="175"/>
    </location>
</feature>
<feature type="binding site" evidence="1">
    <location>
        <begin position="62"/>
        <end position="66"/>
    </location>
    <ligand>
        <name>FMN</name>
        <dbReference type="ChEBI" id="CHEBI:58210"/>
    </ligand>
</feature>
<feature type="binding site" evidence="1">
    <location>
        <position position="66"/>
    </location>
    <ligand>
        <name>substrate</name>
    </ligand>
</feature>
<feature type="binding site" evidence="1">
    <location>
        <position position="86"/>
    </location>
    <ligand>
        <name>FMN</name>
        <dbReference type="ChEBI" id="CHEBI:58210"/>
    </ligand>
</feature>
<feature type="binding site" evidence="1">
    <location>
        <begin position="111"/>
        <end position="115"/>
    </location>
    <ligand>
        <name>substrate</name>
    </ligand>
</feature>
<feature type="binding site" evidence="1">
    <location>
        <position position="139"/>
    </location>
    <ligand>
        <name>FMN</name>
        <dbReference type="ChEBI" id="CHEBI:58210"/>
    </ligand>
</feature>
<feature type="binding site" evidence="1">
    <location>
        <position position="172"/>
    </location>
    <ligand>
        <name>FMN</name>
        <dbReference type="ChEBI" id="CHEBI:58210"/>
    </ligand>
</feature>
<feature type="binding site" evidence="1">
    <location>
        <position position="172"/>
    </location>
    <ligand>
        <name>substrate</name>
    </ligand>
</feature>
<feature type="binding site" evidence="1">
    <location>
        <position position="177"/>
    </location>
    <ligand>
        <name>substrate</name>
    </ligand>
</feature>
<feature type="binding site" evidence="1">
    <location>
        <position position="217"/>
    </location>
    <ligand>
        <name>FMN</name>
        <dbReference type="ChEBI" id="CHEBI:58210"/>
    </ligand>
</feature>
<feature type="binding site" evidence="1">
    <location>
        <position position="245"/>
    </location>
    <ligand>
        <name>FMN</name>
        <dbReference type="ChEBI" id="CHEBI:58210"/>
    </ligand>
</feature>
<feature type="binding site" evidence="1">
    <location>
        <begin position="246"/>
        <end position="247"/>
    </location>
    <ligand>
        <name>substrate</name>
    </ligand>
</feature>
<feature type="binding site" evidence="1">
    <location>
        <position position="268"/>
    </location>
    <ligand>
        <name>FMN</name>
        <dbReference type="ChEBI" id="CHEBI:58210"/>
    </ligand>
</feature>
<feature type="binding site" evidence="1">
    <location>
        <position position="297"/>
    </location>
    <ligand>
        <name>FMN</name>
        <dbReference type="ChEBI" id="CHEBI:58210"/>
    </ligand>
</feature>
<feature type="binding site" evidence="1">
    <location>
        <begin position="318"/>
        <end position="319"/>
    </location>
    <ligand>
        <name>FMN</name>
        <dbReference type="ChEBI" id="CHEBI:58210"/>
    </ligand>
</feature>
<evidence type="ECO:0000255" key="1">
    <source>
        <dbReference type="HAMAP-Rule" id="MF_00225"/>
    </source>
</evidence>
<protein>
    <recommendedName>
        <fullName evidence="1">Dihydroorotate dehydrogenase (quinone)</fullName>
        <ecNumber evidence="1">1.3.5.2</ecNumber>
    </recommendedName>
    <alternativeName>
        <fullName evidence="1">DHOdehase</fullName>
        <shortName evidence="1">DHOD</shortName>
        <shortName evidence="1">DHODase</shortName>
    </alternativeName>
    <alternativeName>
        <fullName evidence="1">Dihydroorotate oxidase</fullName>
    </alternativeName>
</protein>
<gene>
    <name evidence="1" type="primary">pyrD</name>
    <name type="ordered locus">SeAg_B1016</name>
</gene>
<organism>
    <name type="scientific">Salmonella agona (strain SL483)</name>
    <dbReference type="NCBI Taxonomy" id="454166"/>
    <lineage>
        <taxon>Bacteria</taxon>
        <taxon>Pseudomonadati</taxon>
        <taxon>Pseudomonadota</taxon>
        <taxon>Gammaproteobacteria</taxon>
        <taxon>Enterobacterales</taxon>
        <taxon>Enterobacteriaceae</taxon>
        <taxon>Salmonella</taxon>
    </lineage>
</organism>
<name>PYRD_SALA4</name>
<comment type="function">
    <text evidence="1">Catalyzes the conversion of dihydroorotate to orotate with quinone as electron acceptor.</text>
</comment>
<comment type="catalytic activity">
    <reaction evidence="1">
        <text>(S)-dihydroorotate + a quinone = orotate + a quinol</text>
        <dbReference type="Rhea" id="RHEA:30187"/>
        <dbReference type="ChEBI" id="CHEBI:24646"/>
        <dbReference type="ChEBI" id="CHEBI:30839"/>
        <dbReference type="ChEBI" id="CHEBI:30864"/>
        <dbReference type="ChEBI" id="CHEBI:132124"/>
        <dbReference type="EC" id="1.3.5.2"/>
    </reaction>
</comment>
<comment type="cofactor">
    <cofactor evidence="1">
        <name>FMN</name>
        <dbReference type="ChEBI" id="CHEBI:58210"/>
    </cofactor>
    <text evidence="1">Binds 1 FMN per subunit.</text>
</comment>
<comment type="pathway">
    <text evidence="1">Pyrimidine metabolism; UMP biosynthesis via de novo pathway; orotate from (S)-dihydroorotate (quinone route): step 1/1.</text>
</comment>
<comment type="subunit">
    <text evidence="1">Monomer.</text>
</comment>
<comment type="subcellular location">
    <subcellularLocation>
        <location evidence="1">Cell membrane</location>
        <topology evidence="1">Peripheral membrane protein</topology>
    </subcellularLocation>
</comment>
<comment type="similarity">
    <text evidence="1">Belongs to the dihydroorotate dehydrogenase family. Type 2 subfamily.</text>
</comment>
<proteinExistence type="inferred from homology"/>
<accession>B5F1U2</accession>
<sequence length="336" mass="36740">MYYPFVRKALFQLDPERAHEFTFQQLRRITGTPLEALVRQKVPTKPVTCMGLTFKNPLGLAAGLDKDGECIDALGAMGFGSLEIGTVTPRPQPGNDKPRLFRLVDAEGLINRMGFNNLGVDNLVENVKKAHFDGILGINIGKNKDTPVENGKDDYLICMEKVYAYAGYIAINISSPNTPGLRTLQYGDALDDLLTAIKNKQNDLQAIHHKYVPVAVKIAPDLCEEELIQVADSLLRHNIDGVIATNTTLDRSLVQGMKNCQQTGGLSGRPLQLKSTEIIRRLSQELKGQLPIIGVGGIDSVIAAREKIAAGATLVQIYSGFIFKGPPLIKEIVTHI</sequence>